<proteinExistence type="inferred from homology"/>
<gene>
    <name evidence="1" type="primary">ligA</name>
    <name type="ordered locus">E2348C_2597</name>
</gene>
<dbReference type="EC" id="6.5.1.2" evidence="1"/>
<dbReference type="EMBL" id="FM180568">
    <property type="protein sequence ID" value="CAS10145.1"/>
    <property type="molecule type" value="Genomic_DNA"/>
</dbReference>
<dbReference type="RefSeq" id="WP_000443648.1">
    <property type="nucleotide sequence ID" value="NC_011601.1"/>
</dbReference>
<dbReference type="SMR" id="B7UGB2"/>
<dbReference type="KEGG" id="ecg:E2348C_2597"/>
<dbReference type="HOGENOM" id="CLU_007764_2_1_6"/>
<dbReference type="Proteomes" id="UP000008205">
    <property type="component" value="Chromosome"/>
</dbReference>
<dbReference type="GO" id="GO:0005829">
    <property type="term" value="C:cytosol"/>
    <property type="evidence" value="ECO:0007669"/>
    <property type="project" value="TreeGrafter"/>
</dbReference>
<dbReference type="GO" id="GO:0003677">
    <property type="term" value="F:DNA binding"/>
    <property type="evidence" value="ECO:0007669"/>
    <property type="project" value="InterPro"/>
</dbReference>
<dbReference type="GO" id="GO:0003911">
    <property type="term" value="F:DNA ligase (NAD+) activity"/>
    <property type="evidence" value="ECO:0007669"/>
    <property type="project" value="UniProtKB-UniRule"/>
</dbReference>
<dbReference type="GO" id="GO:0046872">
    <property type="term" value="F:metal ion binding"/>
    <property type="evidence" value="ECO:0007669"/>
    <property type="project" value="UniProtKB-KW"/>
</dbReference>
<dbReference type="GO" id="GO:0006281">
    <property type="term" value="P:DNA repair"/>
    <property type="evidence" value="ECO:0007669"/>
    <property type="project" value="UniProtKB-KW"/>
</dbReference>
<dbReference type="GO" id="GO:0006260">
    <property type="term" value="P:DNA replication"/>
    <property type="evidence" value="ECO:0007669"/>
    <property type="project" value="UniProtKB-KW"/>
</dbReference>
<dbReference type="CDD" id="cd17748">
    <property type="entry name" value="BRCT_DNA_ligase_like"/>
    <property type="match status" value="1"/>
</dbReference>
<dbReference type="CDD" id="cd00114">
    <property type="entry name" value="LIGANc"/>
    <property type="match status" value="1"/>
</dbReference>
<dbReference type="FunFam" id="1.10.150.20:FF:000006">
    <property type="entry name" value="DNA ligase"/>
    <property type="match status" value="1"/>
</dbReference>
<dbReference type="FunFam" id="1.10.150.20:FF:000007">
    <property type="entry name" value="DNA ligase"/>
    <property type="match status" value="1"/>
</dbReference>
<dbReference type="FunFam" id="1.10.287.610:FF:000002">
    <property type="entry name" value="DNA ligase"/>
    <property type="match status" value="1"/>
</dbReference>
<dbReference type="FunFam" id="2.40.50.140:FF:000012">
    <property type="entry name" value="DNA ligase"/>
    <property type="match status" value="1"/>
</dbReference>
<dbReference type="FunFam" id="3.30.470.30:FF:000001">
    <property type="entry name" value="DNA ligase"/>
    <property type="match status" value="1"/>
</dbReference>
<dbReference type="FunFam" id="3.40.50.10190:FF:000004">
    <property type="entry name" value="DNA ligase"/>
    <property type="match status" value="1"/>
</dbReference>
<dbReference type="FunFam" id="6.20.10.30:FF:000001">
    <property type="entry name" value="DNA ligase"/>
    <property type="match status" value="1"/>
</dbReference>
<dbReference type="Gene3D" id="6.20.10.30">
    <property type="match status" value="1"/>
</dbReference>
<dbReference type="Gene3D" id="1.10.150.20">
    <property type="entry name" value="5' to 3' exonuclease, C-terminal subdomain"/>
    <property type="match status" value="2"/>
</dbReference>
<dbReference type="Gene3D" id="3.40.50.10190">
    <property type="entry name" value="BRCT domain"/>
    <property type="match status" value="1"/>
</dbReference>
<dbReference type="Gene3D" id="3.30.470.30">
    <property type="entry name" value="DNA ligase/mRNA capping enzyme"/>
    <property type="match status" value="1"/>
</dbReference>
<dbReference type="Gene3D" id="1.10.287.610">
    <property type="entry name" value="Helix hairpin bin"/>
    <property type="match status" value="1"/>
</dbReference>
<dbReference type="Gene3D" id="2.40.50.140">
    <property type="entry name" value="Nucleic acid-binding proteins"/>
    <property type="match status" value="1"/>
</dbReference>
<dbReference type="HAMAP" id="MF_01588">
    <property type="entry name" value="DNA_ligase_A"/>
    <property type="match status" value="1"/>
</dbReference>
<dbReference type="InterPro" id="IPR001357">
    <property type="entry name" value="BRCT_dom"/>
</dbReference>
<dbReference type="InterPro" id="IPR036420">
    <property type="entry name" value="BRCT_dom_sf"/>
</dbReference>
<dbReference type="InterPro" id="IPR041663">
    <property type="entry name" value="DisA/LigA_HHH"/>
</dbReference>
<dbReference type="InterPro" id="IPR001679">
    <property type="entry name" value="DNA_ligase"/>
</dbReference>
<dbReference type="InterPro" id="IPR018239">
    <property type="entry name" value="DNA_ligase_AS"/>
</dbReference>
<dbReference type="InterPro" id="IPR033136">
    <property type="entry name" value="DNA_ligase_CS"/>
</dbReference>
<dbReference type="InterPro" id="IPR013839">
    <property type="entry name" value="DNAligase_adenylation"/>
</dbReference>
<dbReference type="InterPro" id="IPR013840">
    <property type="entry name" value="DNAligase_N"/>
</dbReference>
<dbReference type="InterPro" id="IPR003583">
    <property type="entry name" value="Hlx-hairpin-Hlx_DNA-bd_motif"/>
</dbReference>
<dbReference type="InterPro" id="IPR012340">
    <property type="entry name" value="NA-bd_OB-fold"/>
</dbReference>
<dbReference type="InterPro" id="IPR004150">
    <property type="entry name" value="NAD_DNA_ligase_OB"/>
</dbReference>
<dbReference type="InterPro" id="IPR010994">
    <property type="entry name" value="RuvA_2-like"/>
</dbReference>
<dbReference type="InterPro" id="IPR004149">
    <property type="entry name" value="Znf_DNAligase_C4"/>
</dbReference>
<dbReference type="NCBIfam" id="TIGR00575">
    <property type="entry name" value="dnlj"/>
    <property type="match status" value="1"/>
</dbReference>
<dbReference type="NCBIfam" id="NF005932">
    <property type="entry name" value="PRK07956.1"/>
    <property type="match status" value="1"/>
</dbReference>
<dbReference type="PANTHER" id="PTHR23389">
    <property type="entry name" value="CHROMOSOME TRANSMISSION FIDELITY FACTOR 18"/>
    <property type="match status" value="1"/>
</dbReference>
<dbReference type="PANTHER" id="PTHR23389:SF9">
    <property type="entry name" value="DNA LIGASE"/>
    <property type="match status" value="1"/>
</dbReference>
<dbReference type="Pfam" id="PF00533">
    <property type="entry name" value="BRCT"/>
    <property type="match status" value="1"/>
</dbReference>
<dbReference type="Pfam" id="PF01653">
    <property type="entry name" value="DNA_ligase_aden"/>
    <property type="match status" value="1"/>
</dbReference>
<dbReference type="Pfam" id="PF03120">
    <property type="entry name" value="DNA_ligase_OB"/>
    <property type="match status" value="1"/>
</dbReference>
<dbReference type="Pfam" id="PF03119">
    <property type="entry name" value="DNA_ligase_ZBD"/>
    <property type="match status" value="1"/>
</dbReference>
<dbReference type="Pfam" id="PF12826">
    <property type="entry name" value="HHH_2"/>
    <property type="match status" value="1"/>
</dbReference>
<dbReference type="Pfam" id="PF14520">
    <property type="entry name" value="HHH_5"/>
    <property type="match status" value="1"/>
</dbReference>
<dbReference type="Pfam" id="PF22745">
    <property type="entry name" value="Nlig-Ia"/>
    <property type="match status" value="1"/>
</dbReference>
<dbReference type="PIRSF" id="PIRSF001604">
    <property type="entry name" value="LigA"/>
    <property type="match status" value="1"/>
</dbReference>
<dbReference type="SMART" id="SM00292">
    <property type="entry name" value="BRCT"/>
    <property type="match status" value="1"/>
</dbReference>
<dbReference type="SMART" id="SM00278">
    <property type="entry name" value="HhH1"/>
    <property type="match status" value="4"/>
</dbReference>
<dbReference type="SMART" id="SM00532">
    <property type="entry name" value="LIGANc"/>
    <property type="match status" value="1"/>
</dbReference>
<dbReference type="SUPFAM" id="SSF52113">
    <property type="entry name" value="BRCT domain"/>
    <property type="match status" value="1"/>
</dbReference>
<dbReference type="SUPFAM" id="SSF56091">
    <property type="entry name" value="DNA ligase/mRNA capping enzyme, catalytic domain"/>
    <property type="match status" value="1"/>
</dbReference>
<dbReference type="SUPFAM" id="SSF50249">
    <property type="entry name" value="Nucleic acid-binding proteins"/>
    <property type="match status" value="1"/>
</dbReference>
<dbReference type="SUPFAM" id="SSF47781">
    <property type="entry name" value="RuvA domain 2-like"/>
    <property type="match status" value="1"/>
</dbReference>
<dbReference type="PROSITE" id="PS50172">
    <property type="entry name" value="BRCT"/>
    <property type="match status" value="1"/>
</dbReference>
<dbReference type="PROSITE" id="PS01055">
    <property type="entry name" value="DNA_LIGASE_N1"/>
    <property type="match status" value="1"/>
</dbReference>
<dbReference type="PROSITE" id="PS01056">
    <property type="entry name" value="DNA_LIGASE_N2"/>
    <property type="match status" value="1"/>
</dbReference>
<accession>B7UGB2</accession>
<reference key="1">
    <citation type="journal article" date="2009" name="J. Bacteriol.">
        <title>Complete genome sequence and comparative genome analysis of enteropathogenic Escherichia coli O127:H6 strain E2348/69.</title>
        <authorList>
            <person name="Iguchi A."/>
            <person name="Thomson N.R."/>
            <person name="Ogura Y."/>
            <person name="Saunders D."/>
            <person name="Ooka T."/>
            <person name="Henderson I.R."/>
            <person name="Harris D."/>
            <person name="Asadulghani M."/>
            <person name="Kurokawa K."/>
            <person name="Dean P."/>
            <person name="Kenny B."/>
            <person name="Quail M.A."/>
            <person name="Thurston S."/>
            <person name="Dougan G."/>
            <person name="Hayashi T."/>
            <person name="Parkhill J."/>
            <person name="Frankel G."/>
        </authorList>
    </citation>
    <scope>NUCLEOTIDE SEQUENCE [LARGE SCALE GENOMIC DNA]</scope>
    <source>
        <strain>E2348/69 / EPEC</strain>
    </source>
</reference>
<name>DNLJ_ECO27</name>
<feature type="chain" id="PRO_0000380368" description="DNA ligase">
    <location>
        <begin position="1"/>
        <end position="671"/>
    </location>
</feature>
<feature type="domain" description="BRCT" evidence="1">
    <location>
        <begin position="593"/>
        <end position="671"/>
    </location>
</feature>
<feature type="active site" description="N6-AMP-lysine intermediate" evidence="1">
    <location>
        <position position="115"/>
    </location>
</feature>
<feature type="binding site" evidence="1">
    <location>
        <begin position="32"/>
        <end position="36"/>
    </location>
    <ligand>
        <name>NAD(+)</name>
        <dbReference type="ChEBI" id="CHEBI:57540"/>
    </ligand>
</feature>
<feature type="binding site" evidence="1">
    <location>
        <begin position="81"/>
        <end position="82"/>
    </location>
    <ligand>
        <name>NAD(+)</name>
        <dbReference type="ChEBI" id="CHEBI:57540"/>
    </ligand>
</feature>
<feature type="binding site" evidence="1">
    <location>
        <position position="113"/>
    </location>
    <ligand>
        <name>NAD(+)</name>
        <dbReference type="ChEBI" id="CHEBI:57540"/>
    </ligand>
</feature>
<feature type="binding site" evidence="1">
    <location>
        <position position="136"/>
    </location>
    <ligand>
        <name>NAD(+)</name>
        <dbReference type="ChEBI" id="CHEBI:57540"/>
    </ligand>
</feature>
<feature type="binding site" evidence="1">
    <location>
        <position position="173"/>
    </location>
    <ligand>
        <name>NAD(+)</name>
        <dbReference type="ChEBI" id="CHEBI:57540"/>
    </ligand>
</feature>
<feature type="binding site" evidence="1">
    <location>
        <position position="290"/>
    </location>
    <ligand>
        <name>NAD(+)</name>
        <dbReference type="ChEBI" id="CHEBI:57540"/>
    </ligand>
</feature>
<feature type="binding site" evidence="1">
    <location>
        <position position="314"/>
    </location>
    <ligand>
        <name>NAD(+)</name>
        <dbReference type="ChEBI" id="CHEBI:57540"/>
    </ligand>
</feature>
<feature type="binding site" evidence="1">
    <location>
        <position position="408"/>
    </location>
    <ligand>
        <name>Zn(2+)</name>
        <dbReference type="ChEBI" id="CHEBI:29105"/>
    </ligand>
</feature>
<feature type="binding site" evidence="1">
    <location>
        <position position="411"/>
    </location>
    <ligand>
        <name>Zn(2+)</name>
        <dbReference type="ChEBI" id="CHEBI:29105"/>
    </ligand>
</feature>
<feature type="binding site" evidence="1">
    <location>
        <position position="426"/>
    </location>
    <ligand>
        <name>Zn(2+)</name>
        <dbReference type="ChEBI" id="CHEBI:29105"/>
    </ligand>
</feature>
<feature type="binding site" evidence="1">
    <location>
        <position position="432"/>
    </location>
    <ligand>
        <name>Zn(2+)</name>
        <dbReference type="ChEBI" id="CHEBI:29105"/>
    </ligand>
</feature>
<organism>
    <name type="scientific">Escherichia coli O127:H6 (strain E2348/69 / EPEC)</name>
    <dbReference type="NCBI Taxonomy" id="574521"/>
    <lineage>
        <taxon>Bacteria</taxon>
        <taxon>Pseudomonadati</taxon>
        <taxon>Pseudomonadota</taxon>
        <taxon>Gammaproteobacteria</taxon>
        <taxon>Enterobacterales</taxon>
        <taxon>Enterobacteriaceae</taxon>
        <taxon>Escherichia</taxon>
    </lineage>
</organism>
<protein>
    <recommendedName>
        <fullName evidence="1">DNA ligase</fullName>
        <ecNumber evidence="1">6.5.1.2</ecNumber>
    </recommendedName>
    <alternativeName>
        <fullName evidence="1">Polydeoxyribonucleotide synthase [NAD(+)]</fullName>
    </alternativeName>
</protein>
<comment type="function">
    <text evidence="1">DNA ligase that catalyzes the formation of phosphodiester linkages between 5'-phosphoryl and 3'-hydroxyl groups in double-stranded DNA using NAD as a coenzyme and as the energy source for the reaction. It is essential for DNA replication and repair of damaged DNA.</text>
</comment>
<comment type="catalytic activity">
    <reaction evidence="1">
        <text>NAD(+) + (deoxyribonucleotide)n-3'-hydroxyl + 5'-phospho-(deoxyribonucleotide)m = (deoxyribonucleotide)n+m + AMP + beta-nicotinamide D-nucleotide.</text>
        <dbReference type="EC" id="6.5.1.2"/>
    </reaction>
</comment>
<comment type="cofactor">
    <cofactor evidence="1">
        <name>Mg(2+)</name>
        <dbReference type="ChEBI" id="CHEBI:18420"/>
    </cofactor>
    <cofactor evidence="1">
        <name>Mn(2+)</name>
        <dbReference type="ChEBI" id="CHEBI:29035"/>
    </cofactor>
</comment>
<comment type="similarity">
    <text evidence="1">Belongs to the NAD-dependent DNA ligase family. LigA subfamily.</text>
</comment>
<keyword id="KW-0227">DNA damage</keyword>
<keyword id="KW-0234">DNA repair</keyword>
<keyword id="KW-0235">DNA replication</keyword>
<keyword id="KW-0436">Ligase</keyword>
<keyword id="KW-0460">Magnesium</keyword>
<keyword id="KW-0464">Manganese</keyword>
<keyword id="KW-0479">Metal-binding</keyword>
<keyword id="KW-0520">NAD</keyword>
<keyword id="KW-1185">Reference proteome</keyword>
<keyword id="KW-0862">Zinc</keyword>
<evidence type="ECO:0000255" key="1">
    <source>
        <dbReference type="HAMAP-Rule" id="MF_01588"/>
    </source>
</evidence>
<sequence>MESIEQQLIELRTTLRHHEYLYHVMDAPEIPDAEYDRLMRELRELETKHPELITPDSPTQRVGAAPLAAFSQIRHEVPMLSLDNVFDEESFLAFNKRVQDRLKSNEKVTWCCELKLDGLAVSILYENGVLVSAATRGDGTTGEDITSNVRTIRAIPLKLHGENIPARLEVRGEVFLPQAGFEKINEDARRTGGKVFANPRNAAAGSLRQLDPRITAKRPLTFFCYGVGVLEGGELPDTHLGRLMQFKAWGLPVSDRVTLCESAEEVLAFYHEVEKDRPTLGFDIDGVVIKVNSLAQQEQLGFVARAPRWAVAFKFPAQEQMTFVRDVEFQVGRTGAITPVARLEPVHVAGVLVSNATLHNADEIERLGLRIGDKVVIRRAGDVIPQVVNVVLSERPEDTREVVFPTHCPVCGSDVERVEGEAVARCTGGLICGAQRKESLKHFVSRRAMDVDGMGDKIIDQLVEKEYVHTPADLFKLTAVKLTGLERMGPKSAQNVVNALEKAKETTFARFLYALGIREVGEATAAGLAAYFGTLEALEAASIEELQKVPDVGIVVASHVHNFFAEESNRNVISELLAEGVHWPEPIVINAEEIDSPFAGKTVVLTGSLSQMSRDDAKARLVELGAKVAGSVSKKTDLVIAGEAAGSKLAKAQELGIEVIDETEMLRLLGS</sequence>